<sequence length="376" mass="42679">MSEEAVALVVDNGSGMVKSGLAGDDAPKCVFPSIVGRPKMPNIMIGMEQKECYVGDEAQNKRGILTLKYPIEHGIVTNWDDMEKIWHHTFYNELRVSPEEHPVLLTEAPLNPKTNREKMTQIMFETFDVPAMYVSIQAILSLYASGRTTGIVLDSGDGVSHTVPIYEGYVLPHAINRIDMAGRDLTYHMMKWFTERGHTFTTTAEREIVRDIKEKLCYIAMDYDEELKRSEEHSDEIEEIYELPDGNLITVGSERFRCPEALFNPTLIGRECPGLHITAYQSIMKCDIDIRKELYNNIVLSGGTTMYNNIGERLTKEMTNLAPSSMKIKVIAPPERKYSVWIGGSILSSLSTFQQMWITKEEYEDSGPSIVHRKCF</sequence>
<keyword id="KW-0067">ATP-binding</keyword>
<keyword id="KW-0963">Cytoplasm</keyword>
<keyword id="KW-0206">Cytoskeleton</keyword>
<keyword id="KW-0378">Hydrolase</keyword>
<keyword id="KW-0488">Methylation</keyword>
<keyword id="KW-0547">Nucleotide-binding</keyword>
<reference key="1">
    <citation type="journal article" date="1988" name="Mol. Biochem. Parasitol.">
        <title>Extremely diverged actin proteins in Plasmodium falciparum.</title>
        <authorList>
            <person name="Wesseling J.G."/>
            <person name="Smits M.A."/>
            <person name="Schoenmakers J.G.G."/>
        </authorList>
    </citation>
    <scope>NUCLEOTIDE SEQUENCE [MRNA]</scope>
</reference>
<reference key="2">
    <citation type="journal article" date="1989" name="Mol. Biochem. Parasitol.">
        <title>Stage-specific expression and genomic organization of the actin genes of the malaria parasite Plasmodium falciparum.</title>
        <authorList>
            <person name="Wesseling J.G."/>
            <person name="Snijders P.J.F."/>
            <person name="van Someren P."/>
            <person name="Jansen J."/>
            <person name="Smits M.A."/>
            <person name="Schoenmakers J.G.G."/>
        </authorList>
    </citation>
    <scope>NUCLEOTIDE SEQUENCE [GENOMIC DNA]</scope>
    <scope>DEVELOPMENTAL STAGE</scope>
</reference>
<comment type="function">
    <text evidence="1">Actin is a highly conserved protein that polymerizes to produce filaments that form cross-linked networks in the cytoplasm. Polymerizes into longer and more stable actin filaments compared to ACT1/actin-1. Has ATPase activity. ATP hydrolysis leads to the formation of a stable intermediate ADP-inorganic phosphate (Pi) actin, which is followed by the release of Pi. ATP hydrolysis affects filament stability; ADP-bound actin depolymerizes much faster than ATP- or ADP-Pi-bound actin. Plays an essential role in male gametocyte development in the mosquito midgut, functioning in several processes including male gametocyte egress from host erythrocytes, formation of a beating flagellum and relocalization of ACT1/actin-1 to the cytoplasm. On the basal side of the mosquito midgut epithelium, required for the development of ookinetes into sporogonic oocysts.</text>
</comment>
<comment type="catalytic activity">
    <reaction evidence="1">
        <text>ATP + H2O = ADP + phosphate + H(+)</text>
        <dbReference type="Rhea" id="RHEA:13065"/>
        <dbReference type="ChEBI" id="CHEBI:15377"/>
        <dbReference type="ChEBI" id="CHEBI:15378"/>
        <dbReference type="ChEBI" id="CHEBI:30616"/>
        <dbReference type="ChEBI" id="CHEBI:43474"/>
        <dbReference type="ChEBI" id="CHEBI:456216"/>
    </reaction>
</comment>
<comment type="activity regulation">
    <text evidence="1">ATP hydrolysis occurs in the polymeric state. Unlike for mammalian actin, ATP hydrolysis also occurs in the monomeric form and the release of inorganic phosphate (Pi) is more efficient.</text>
</comment>
<comment type="subunit">
    <text evidence="1">Monomer (G-actin). Oligomer (F-actin). Polymerization of globular actin (G-actin) leads to a structural filament (F-actin) in the form of a two-stranded helix. Unlike for mammalian monomeric actin, monomeric actin is able to induce oligomerization with ATP or ADP. Mg(2+), which is used to coordinate ATP, is required for polymerization.</text>
</comment>
<comment type="subcellular location">
    <subcellularLocation>
        <location evidence="1">Cytoplasm</location>
    </subcellularLocation>
    <subcellularLocation>
        <location evidence="2">Cytoplasm</location>
        <location evidence="2">Cytoskeleton</location>
    </subcellularLocation>
    <text evidence="1">Prior to gametocyte activation in the mosquito midgut, localizes to the cytoplasm. Following gametocyte activation, localizes to a ring around the nucleus.</text>
</comment>
<comment type="developmental stage">
    <text evidence="3">Actin-1 is formed in all parasitic stages; asexual blood stages and in the sexual stages. Actin-2 is stage-specific, formed only in the sexual stages of the parasite's life cycle.</text>
</comment>
<comment type="miscellaneous">
    <text evidence="1">ACT1 and ACT2 differ in their polymerization, filament stability and helical structure. Unlike mammalian actin, Apicomplexa actins do not form long and stable filaments.</text>
</comment>
<comment type="similarity">
    <text evidence="5">Belongs to the actin family.</text>
</comment>
<organism>
    <name type="scientific">Plasmodium falciparum (isolate NF54)</name>
    <dbReference type="NCBI Taxonomy" id="5843"/>
    <lineage>
        <taxon>Eukaryota</taxon>
        <taxon>Sar</taxon>
        <taxon>Alveolata</taxon>
        <taxon>Apicomplexa</taxon>
        <taxon>Aconoidasida</taxon>
        <taxon>Haemosporida</taxon>
        <taxon>Plasmodiidae</taxon>
        <taxon>Plasmodium</taxon>
        <taxon>Plasmodium (Laverania)</taxon>
    </lineage>
</organism>
<name>ACT2_PLAFO</name>
<gene>
    <name evidence="5" type="primary">ACT2</name>
    <name evidence="1" type="synonym">ACTII</name>
</gene>
<protein>
    <recommendedName>
        <fullName evidence="1">Actin-2</fullName>
        <ecNumber evidence="1">3.6.4.-</ecNumber>
    </recommendedName>
    <alternativeName>
        <fullName evidence="4">Actin II</fullName>
        <shortName evidence="4">pf-actin II</shortName>
    </alternativeName>
</protein>
<dbReference type="EC" id="3.6.4.-" evidence="1"/>
<dbReference type="EMBL" id="M18817">
    <property type="protein sequence ID" value="AAA29466.1"/>
    <property type="molecule type" value="mRNA"/>
</dbReference>
<dbReference type="EMBL" id="M22718">
    <property type="protein sequence ID" value="AAA29467.1"/>
    <property type="molecule type" value="Genomic_DNA"/>
</dbReference>
<dbReference type="PIR" id="A45525">
    <property type="entry name" value="A54509"/>
</dbReference>
<dbReference type="SMR" id="P14883"/>
<dbReference type="GO" id="GO:0005884">
    <property type="term" value="C:actin filament"/>
    <property type="evidence" value="ECO:0000250"/>
    <property type="project" value="UniProtKB"/>
</dbReference>
<dbReference type="GO" id="GO:0005737">
    <property type="term" value="C:cytoplasm"/>
    <property type="evidence" value="ECO:0007669"/>
    <property type="project" value="UniProtKB-SubCell"/>
</dbReference>
<dbReference type="GO" id="GO:0005524">
    <property type="term" value="F:ATP binding"/>
    <property type="evidence" value="ECO:0007669"/>
    <property type="project" value="UniProtKB-KW"/>
</dbReference>
<dbReference type="GO" id="GO:0016787">
    <property type="term" value="F:hydrolase activity"/>
    <property type="evidence" value="ECO:0007669"/>
    <property type="project" value="UniProtKB-KW"/>
</dbReference>
<dbReference type="GO" id="GO:0005200">
    <property type="term" value="F:structural constituent of cytoskeleton"/>
    <property type="evidence" value="ECO:0000250"/>
    <property type="project" value="UniProtKB"/>
</dbReference>
<dbReference type="GO" id="GO:0070360">
    <property type="term" value="P:symbiont-mediated actin polymerization-dependent cell-to-cell migration in host"/>
    <property type="evidence" value="ECO:0000250"/>
    <property type="project" value="UniProtKB"/>
</dbReference>
<dbReference type="CDD" id="cd10224">
    <property type="entry name" value="ASKHA_NBD_actin"/>
    <property type="match status" value="1"/>
</dbReference>
<dbReference type="FunFam" id="3.90.640.10:FF:000007">
    <property type="entry name" value="Actin like 7B"/>
    <property type="match status" value="1"/>
</dbReference>
<dbReference type="FunFam" id="3.30.420.40:FF:000291">
    <property type="entry name" value="Actin, alpha skeletal muscle"/>
    <property type="match status" value="1"/>
</dbReference>
<dbReference type="FunFam" id="3.30.420.40:FF:000501">
    <property type="entry name" value="Predicted protein"/>
    <property type="match status" value="1"/>
</dbReference>
<dbReference type="FunFam" id="3.30.420.40:FF:000058">
    <property type="entry name" value="Putative actin-related protein 5"/>
    <property type="match status" value="1"/>
</dbReference>
<dbReference type="Gene3D" id="3.30.420.40">
    <property type="match status" value="2"/>
</dbReference>
<dbReference type="Gene3D" id="3.90.640.10">
    <property type="entry name" value="Actin, Chain A, domain 4"/>
    <property type="match status" value="1"/>
</dbReference>
<dbReference type="InterPro" id="IPR004000">
    <property type="entry name" value="Actin"/>
</dbReference>
<dbReference type="InterPro" id="IPR020902">
    <property type="entry name" value="Actin/actin-like_CS"/>
</dbReference>
<dbReference type="InterPro" id="IPR004001">
    <property type="entry name" value="Actin_CS"/>
</dbReference>
<dbReference type="InterPro" id="IPR043129">
    <property type="entry name" value="ATPase_NBD"/>
</dbReference>
<dbReference type="PANTHER" id="PTHR11937">
    <property type="entry name" value="ACTIN"/>
    <property type="match status" value="1"/>
</dbReference>
<dbReference type="Pfam" id="PF00022">
    <property type="entry name" value="Actin"/>
    <property type="match status" value="1"/>
</dbReference>
<dbReference type="PRINTS" id="PR00190">
    <property type="entry name" value="ACTIN"/>
</dbReference>
<dbReference type="SMART" id="SM00268">
    <property type="entry name" value="ACTIN"/>
    <property type="match status" value="1"/>
</dbReference>
<dbReference type="SUPFAM" id="SSF53067">
    <property type="entry name" value="Actin-like ATPase domain"/>
    <property type="match status" value="2"/>
</dbReference>
<dbReference type="PROSITE" id="PS00406">
    <property type="entry name" value="ACTINS_1"/>
    <property type="match status" value="1"/>
</dbReference>
<dbReference type="PROSITE" id="PS00432">
    <property type="entry name" value="ACTINS_2"/>
    <property type="match status" value="1"/>
</dbReference>
<dbReference type="PROSITE" id="PS01132">
    <property type="entry name" value="ACTINS_ACT_LIKE"/>
    <property type="match status" value="1"/>
</dbReference>
<accession>P14883</accession>
<proteinExistence type="evidence at transcript level"/>
<evidence type="ECO:0000250" key="1">
    <source>
        <dbReference type="UniProtKB" id="Q4YU79"/>
    </source>
</evidence>
<evidence type="ECO:0000250" key="2">
    <source>
        <dbReference type="UniProtKB" id="Q8I4X0"/>
    </source>
</evidence>
<evidence type="ECO:0000269" key="3">
    <source>
    </source>
</evidence>
<evidence type="ECO:0000303" key="4">
    <source>
    </source>
</evidence>
<evidence type="ECO:0000305" key="5"/>
<feature type="chain" id="PRO_0000088995" description="Actin-2">
    <location>
        <begin position="1"/>
        <end position="376"/>
    </location>
</feature>
<feature type="binding site" evidence="1">
    <location>
        <position position="14"/>
    </location>
    <ligand>
        <name>ATP</name>
        <dbReference type="ChEBI" id="CHEBI:30616"/>
    </ligand>
</feature>
<feature type="binding site" evidence="1">
    <location>
        <position position="15"/>
    </location>
    <ligand>
        <name>ATP</name>
        <dbReference type="ChEBI" id="CHEBI:30616"/>
    </ligand>
</feature>
<feature type="binding site" evidence="1">
    <location>
        <position position="16"/>
    </location>
    <ligand>
        <name>ATP</name>
        <dbReference type="ChEBI" id="CHEBI:30616"/>
    </ligand>
</feature>
<feature type="binding site" evidence="1">
    <location>
        <position position="18"/>
    </location>
    <ligand>
        <name>ATP</name>
        <dbReference type="ChEBI" id="CHEBI:30616"/>
    </ligand>
</feature>
<feature type="binding site" evidence="1">
    <location>
        <position position="157"/>
    </location>
    <ligand>
        <name>ATP</name>
        <dbReference type="ChEBI" id="CHEBI:30616"/>
    </ligand>
</feature>
<feature type="binding site" evidence="1">
    <location>
        <position position="158"/>
    </location>
    <ligand>
        <name>ATP</name>
        <dbReference type="ChEBI" id="CHEBI:30616"/>
    </ligand>
</feature>
<feature type="binding site" evidence="1">
    <location>
        <position position="159"/>
    </location>
    <ligand>
        <name>ATP</name>
        <dbReference type="ChEBI" id="CHEBI:30616"/>
    </ligand>
</feature>
<feature type="binding site" evidence="1">
    <location>
        <position position="213"/>
    </location>
    <ligand>
        <name>ATP</name>
        <dbReference type="ChEBI" id="CHEBI:30616"/>
    </ligand>
</feature>
<feature type="binding site" evidence="1">
    <location>
        <position position="303"/>
    </location>
    <ligand>
        <name>ATP</name>
        <dbReference type="ChEBI" id="CHEBI:30616"/>
    </ligand>
</feature>
<feature type="modified residue" description="Tele-methylhistidine" evidence="1">
    <location>
        <position position="73"/>
    </location>
</feature>